<sequence length="475" mass="54268">MPSSASMSHHHSSGLRSSISSTSYRRTFGPPPSLSPGAFSYSSSSRFSSSRLLGSGSPSSSARLGSFRAPRAGALRLPSERLDFSMAEALNQEFLATRSNEKQELQELNDRFANFIEKVRFLEQQNAALRGELSQARGQEPARADQLCQQELRELRRELELLGRERDRVQVERDGLAEDLAALKQRLEEETRKREDAEHNLVLFRKDVDDATLSRLELERKIESLMDEIEFLKKLHEEELRDLQVSVESQQVQQVEVEATVKPELTAALRDIRAQYENIAAKNLQEAEEWYKSKYADLSDAANRNHEALRQAKQEMNESRRQIQSLTCEVDGLRGTNEALLRQLRELEEQFALEAGGYQAGAARLEEELRQLKEEMARHLREYQELLNVKMALDIEIATYRKLLEGEESRISVPVHSFASLSLKTTVPEMEPLQDSHSKKMVLIRTIETRDGEKVVTESQKEQHSDLDKSSIHSY</sequence>
<protein>
    <recommendedName>
        <fullName>Peripherin</fullName>
    </recommendedName>
</protein>
<evidence type="ECO:0000250" key="1">
    <source>
        <dbReference type="UniProtKB" id="P21807"/>
    </source>
</evidence>
<evidence type="ECO:0000250" key="2">
    <source>
        <dbReference type="UniProtKB" id="P41219"/>
    </source>
</evidence>
<evidence type="ECO:0000255" key="3">
    <source>
        <dbReference type="PROSITE-ProRule" id="PRU01188"/>
    </source>
</evidence>
<evidence type="ECO:0000256" key="4">
    <source>
        <dbReference type="SAM" id="MobiDB-lite"/>
    </source>
</evidence>
<evidence type="ECO:0000269" key="5">
    <source>
    </source>
</evidence>
<evidence type="ECO:0000269" key="6">
    <source>
    </source>
</evidence>
<evidence type="ECO:0000269" key="7">
    <source>
    </source>
</evidence>
<evidence type="ECO:0000269" key="8">
    <source>
    </source>
</evidence>
<evidence type="ECO:0000269" key="9">
    <source>
    </source>
</evidence>
<evidence type="ECO:0000269" key="10">
    <source>
    </source>
</evidence>
<evidence type="ECO:0000269" key="11">
    <source>
    </source>
</evidence>
<evidence type="ECO:0000269" key="12">
    <source>
    </source>
</evidence>
<evidence type="ECO:0000269" key="13">
    <source>
    </source>
</evidence>
<evidence type="ECO:0000269" key="14">
    <source>
    </source>
</evidence>
<evidence type="ECO:0000305" key="15"/>
<dbReference type="EMBL" id="X15475">
    <property type="protein sequence ID" value="CAA33502.1"/>
    <property type="molecule type" value="mRNA"/>
</dbReference>
<dbReference type="EMBL" id="BC046291">
    <property type="protein sequence ID" value="AAH46291.1"/>
    <property type="molecule type" value="mRNA"/>
</dbReference>
<dbReference type="EMBL" id="X59840">
    <property type="protein sequence ID" value="CAA42499.1"/>
    <property type="molecule type" value="Genomic_DNA"/>
</dbReference>
<dbReference type="EMBL" id="X59840">
    <property type="protein sequence ID" value="CAA42500.1"/>
    <property type="molecule type" value="Genomic_DNA"/>
</dbReference>
<dbReference type="EMBL" id="X59840">
    <property type="protein sequence ID" value="CAA42501.1"/>
    <property type="molecule type" value="Genomic_DNA"/>
</dbReference>
<dbReference type="CCDS" id="CCDS27813.1">
    <molecule id="P15331-2"/>
</dbReference>
<dbReference type="CCDS" id="CCDS49727.1">
    <molecule id="P15331-1"/>
</dbReference>
<dbReference type="PIR" id="S14887">
    <property type="entry name" value="S14887"/>
</dbReference>
<dbReference type="SMR" id="P15331"/>
<dbReference type="FunCoup" id="P15331">
    <property type="interactions" value="199"/>
</dbReference>
<dbReference type="IntAct" id="P15331">
    <property type="interactions" value="10"/>
</dbReference>
<dbReference type="MINT" id="P15331"/>
<dbReference type="STRING" id="10090.ENSMUSP00000049303"/>
<dbReference type="GlyGen" id="P15331">
    <property type="glycosylation" value="1 site, 1 O-linked glycan (1 site)"/>
</dbReference>
<dbReference type="iPTMnet" id="P15331"/>
<dbReference type="PhosphoSitePlus" id="P15331"/>
<dbReference type="jPOST" id="P15331"/>
<dbReference type="PaxDb" id="10090-ENSMUSP00000049303"/>
<dbReference type="ProteomicsDB" id="288030">
    <molecule id="P15331-1"/>
</dbReference>
<dbReference type="ProteomicsDB" id="288031">
    <molecule id="P15331-2"/>
</dbReference>
<dbReference type="ProteomicsDB" id="288032">
    <molecule id="P15331-3"/>
</dbReference>
<dbReference type="Pumba" id="P15331"/>
<dbReference type="ABCD" id="P15331">
    <property type="antibodies" value="1 sequenced antibody"/>
</dbReference>
<dbReference type="AGR" id="MGI:97774"/>
<dbReference type="MGI" id="MGI:97774">
    <property type="gene designation" value="Prph"/>
</dbReference>
<dbReference type="eggNOG" id="ENOG502QPSH">
    <property type="taxonomic scope" value="Eukaryota"/>
</dbReference>
<dbReference type="InParanoid" id="P15331"/>
<dbReference type="PhylomeDB" id="P15331"/>
<dbReference type="CD-CODE" id="CE726F99">
    <property type="entry name" value="Postsynaptic density"/>
</dbReference>
<dbReference type="PRO" id="PR:P15331"/>
<dbReference type="Proteomes" id="UP000000589">
    <property type="component" value="Unplaced"/>
</dbReference>
<dbReference type="RNAct" id="P15331">
    <property type="molecule type" value="protein"/>
</dbReference>
<dbReference type="GO" id="GO:0030424">
    <property type="term" value="C:axon"/>
    <property type="evidence" value="ECO:0000314"/>
    <property type="project" value="MGI"/>
</dbReference>
<dbReference type="GO" id="GO:0044299">
    <property type="term" value="C:C-fiber"/>
    <property type="evidence" value="ECO:0000314"/>
    <property type="project" value="MGI"/>
</dbReference>
<dbReference type="GO" id="GO:0005882">
    <property type="term" value="C:intermediate filament"/>
    <property type="evidence" value="ECO:0000314"/>
    <property type="project" value="MGI"/>
</dbReference>
<dbReference type="GO" id="GO:0005883">
    <property type="term" value="C:neurofilament"/>
    <property type="evidence" value="ECO:0000314"/>
    <property type="project" value="MGI"/>
</dbReference>
<dbReference type="GO" id="GO:0043025">
    <property type="term" value="C:neuronal cell body"/>
    <property type="evidence" value="ECO:0000266"/>
    <property type="project" value="MGI"/>
</dbReference>
<dbReference type="GO" id="GO:0043204">
    <property type="term" value="C:perikaryon"/>
    <property type="evidence" value="ECO:0007669"/>
    <property type="project" value="UniProtKB-SubCell"/>
</dbReference>
<dbReference type="GO" id="GO:0001750">
    <property type="term" value="C:photoreceptor outer segment"/>
    <property type="evidence" value="ECO:0000314"/>
    <property type="project" value="MGI"/>
</dbReference>
<dbReference type="GO" id="GO:0042622">
    <property type="term" value="C:photoreceptor outer segment membrane"/>
    <property type="evidence" value="ECO:0000314"/>
    <property type="project" value="MGI"/>
</dbReference>
<dbReference type="GO" id="GO:0045098">
    <property type="term" value="C:type III intermediate filament"/>
    <property type="evidence" value="ECO:0000314"/>
    <property type="project" value="MGI"/>
</dbReference>
<dbReference type="GO" id="GO:0005198">
    <property type="term" value="F:structural molecule activity"/>
    <property type="evidence" value="ECO:0007669"/>
    <property type="project" value="InterPro"/>
</dbReference>
<dbReference type="GO" id="GO:0045104">
    <property type="term" value="P:intermediate filament cytoskeleton organization"/>
    <property type="evidence" value="ECO:0000314"/>
    <property type="project" value="MGI"/>
</dbReference>
<dbReference type="FunFam" id="1.20.5.1160:FF:000001">
    <property type="entry name" value="Keratin type II"/>
    <property type="match status" value="1"/>
</dbReference>
<dbReference type="FunFam" id="1.20.5.170:FF:000002">
    <property type="entry name" value="Type I keratin KA11"/>
    <property type="match status" value="1"/>
</dbReference>
<dbReference type="FunFam" id="1.20.5.500:FF:000001">
    <property type="entry name" value="Type II keratin 23"/>
    <property type="match status" value="1"/>
</dbReference>
<dbReference type="Gene3D" id="1.20.5.170">
    <property type="match status" value="1"/>
</dbReference>
<dbReference type="Gene3D" id="1.20.5.500">
    <property type="entry name" value="Single helix bin"/>
    <property type="match status" value="1"/>
</dbReference>
<dbReference type="Gene3D" id="1.20.5.1160">
    <property type="entry name" value="Vasodilator-stimulated phosphoprotein"/>
    <property type="match status" value="1"/>
</dbReference>
<dbReference type="InterPro" id="IPR018039">
    <property type="entry name" value="IF_conserved"/>
</dbReference>
<dbReference type="InterPro" id="IPR039008">
    <property type="entry name" value="IF_rod_dom"/>
</dbReference>
<dbReference type="InterPro" id="IPR006821">
    <property type="entry name" value="Intermed_filament_DNA-bd"/>
</dbReference>
<dbReference type="InterPro" id="IPR050405">
    <property type="entry name" value="Intermediate_filament"/>
</dbReference>
<dbReference type="InterPro" id="IPR002957">
    <property type="entry name" value="Keratin_I"/>
</dbReference>
<dbReference type="PANTHER" id="PTHR45652">
    <property type="entry name" value="GLIAL FIBRILLARY ACIDIC PROTEIN"/>
    <property type="match status" value="1"/>
</dbReference>
<dbReference type="PANTHER" id="PTHR45652:SF14">
    <property type="entry name" value="PERIPHERIN"/>
    <property type="match status" value="1"/>
</dbReference>
<dbReference type="Pfam" id="PF00038">
    <property type="entry name" value="Filament"/>
    <property type="match status" value="1"/>
</dbReference>
<dbReference type="Pfam" id="PF04732">
    <property type="entry name" value="Filament_head"/>
    <property type="match status" value="1"/>
</dbReference>
<dbReference type="PRINTS" id="PR01248">
    <property type="entry name" value="TYPE1KERATIN"/>
</dbReference>
<dbReference type="SMART" id="SM01391">
    <property type="entry name" value="Filament"/>
    <property type="match status" value="1"/>
</dbReference>
<dbReference type="SUPFAM" id="SSF64593">
    <property type="entry name" value="Intermediate filament protein, coiled coil region"/>
    <property type="match status" value="2"/>
</dbReference>
<dbReference type="PROSITE" id="PS00226">
    <property type="entry name" value="IF_ROD_1"/>
    <property type="match status" value="1"/>
</dbReference>
<dbReference type="PROSITE" id="PS51842">
    <property type="entry name" value="IF_ROD_2"/>
    <property type="match status" value="1"/>
</dbReference>
<gene>
    <name type="primary">Prph</name>
    <name type="synonym">Prph1</name>
</gene>
<keyword id="KW-0025">Alternative splicing</keyword>
<keyword id="KW-0966">Cell projection</keyword>
<keyword id="KW-0175">Coiled coil</keyword>
<keyword id="KW-0963">Cytoplasm</keyword>
<keyword id="KW-0206">Cytoskeleton</keyword>
<keyword id="KW-0903">Direct protein sequencing</keyword>
<keyword id="KW-0403">Intermediate filament</keyword>
<keyword id="KW-0944">Nitration</keyword>
<keyword id="KW-0597">Phosphoprotein</keyword>
<keyword id="KW-1185">Reference proteome</keyword>
<name>PERI_MOUSE</name>
<comment type="function">
    <text evidence="1 5 6 7 11 12 13">Class-III neuronal intermediate filament protein (By similarity). May form an independent structural network without the involvement of other neurofilaments or may cooperate with the neuronal intermediate filament proteins NEFL, NEFH, NEFM and INA to form filamentous networks (PubMed:10426285, PubMed:15322088, PubMed:22723690). Assembly of the neuronal intermediate filaments may be regulated by RAB7A (PubMed:23179371). Plays a role in the development of unmyelinated sensory neurons (PubMed:12065660). May be involved in axon elongation and axon regeneration after injury (By similarity). Inhibits neurite extension in type II spiral ganglion neurons in the cochlea (PubMed:20132868).</text>
</comment>
<comment type="subunit">
    <text evidence="1 2 5 13 14">Forms homodimers (in vitro) (By similarity). Homopolymerizes into a filamentous network (in vitro) (PubMed:10426285). Forms heterodimers with NEFL, NEFM or NEFH (in vitro) (By similarity). Interacts with DST (via C-terminus) (PubMed:9971739). Interacts with RAB7A; the interaction is direct (PubMed:23179371). Interacts with PRKCE (via phorbol-ester/DAG-type 2 domain) (By similarity).</text>
</comment>
<comment type="interaction">
    <interactant intactId="EBI-1634736">
        <id>P15331</id>
    </interactant>
    <interactant intactId="EBI-7424051">
        <id>Q9EPM5</id>
        <label>Sync</label>
    </interactant>
    <organismsDiffer>false</organismsDiffer>
    <experiments>3</experiments>
</comment>
<comment type="subcellular location">
    <subcellularLocation>
        <location evidence="5 7 10 11 12 13 14">Cytoplasm</location>
        <location evidence="5 7 10 11 12 13 14">Cytoskeleton</location>
    </subcellularLocation>
    <subcellularLocation>
        <location evidence="9 10 11 12 13">Cell projection</location>
        <location evidence="9 10 11 12 13">Axon</location>
    </subcellularLocation>
    <subcellularLocation>
        <location evidence="9 10 11">Perikaryon</location>
    </subcellularLocation>
</comment>
<comment type="alternative products">
    <event type="alternative splicing"/>
    <isoform>
        <id>P15331-1</id>
        <name>5g</name>
        <sequence type="displayed"/>
    </isoform>
    <isoform>
        <id>P15331-2</id>
        <name>3u</name>
        <sequence type="described" ref="VSP_002466"/>
    </isoform>
    <isoform>
        <id>P15331-3</id>
        <name>5b</name>
        <sequence type="described" ref="VSP_002467"/>
    </isoform>
</comment>
<comment type="tissue specificity">
    <text evidence="6 9 10 12">Expressed in the sciatic nerve and at very low levels in the central nervous system (at protein level) (PubMed:22723690). Expressed in the spinal cord, in the sciatic nerve at the level of the dorsal root ganglion and in trigeminal nerves (at protein level) (PubMed:12065660). Expressed in the cranial nerves in the hindbrain, including the sensory and motor trigeminal neurons, the mesencephalic trigeminal neurons, the spinal trigeminal neurons, and in the facial nerve (at protein level) (PubMed:17899157). Expressed in the cerebellum, with expression in the inferior cerebellar peduncle and the lateral deep cerebellar nucleus (at protein level) (PubMed:17899157). Expressed in vestibulocochlear neurons, such as the anteroventral cochlear nucleus, the dorsal cochlear nucleus, the superficial granule cell layer and the granule cell lamina (at protein level) (PubMed:17899157). Expressed in glossopharyngeal, vagal and hypoglossal neurons (at protein level) (PubMed:17899157). Expressed in peripheral sensory neurons, in the dorsal root ganglia and the spinal cord, and to a lower extent in motor neurons (PubMed:18709437). Expressed in the optic tract of the central nervous system, especially in the lateral geniculate nucleus and the superior colliculus (PubMed:18709437). Expressed in neurons of the pineal stalk in the cortex (PubMed:18709437). Expressed in the spinal trigeminal tract of the midbrain, in the medulla and in the medial cerebellar peduncle (PubMed:18709437).</text>
</comment>
<comment type="developmental stage">
    <text evidence="10 11 13">Expressed in the dorsal root ganglia and in the spinal cord at 9.5 dpc (PubMed:18709437). Expressed in the neurons that innervate the limb buds at 13 dpc (PubMed:18709437). Expressed in the dorsal root ganglia and the sciatic nerve at 13.5 dpc (PubMed:23179371). Expressed in type I and type II spiral ganglion neurons of the cochlea at postnatal days P1 to P7 (PubMed:20132868).</text>
</comment>
<comment type="PTM">
    <text evidence="1">Phosphorylated; phosphorylation increases after nerve injury in regenerating neurons.</text>
</comment>
<comment type="disruption phenotype">
    <text evidence="6 11">Mutant mice are viable, reproduce normally and do not exhibit gross morphological defects (PubMed:12065660). Increased levels of intermediate filament proteins Vim in the spinal cord and Ina in L5 ventral roots, and a reduction in the number of L5 unmyelinated sensory fibers (PubMed:12065660). More and longer type II spiral ganglion neuron neurites during cochlear neuritogenesis at P1 (PubMed:20132868).</text>
</comment>
<comment type="similarity">
    <text evidence="3">Belongs to the intermediate filament family.</text>
</comment>
<proteinExistence type="evidence at protein level"/>
<accession>P15331</accession>
<accession>O35688</accession>
<accession>O35689</accession>
<reference key="1">
    <citation type="journal article" date="1992" name="Biol. Cell">
        <title>Structure of the mouse gene encoding peripherin: a neuronal intermediate filament protein.</title>
        <authorList>
            <person name="Karpov V."/>
            <person name="Landon F."/>
            <person name="Djabali K."/>
            <person name="Gros F."/>
            <person name="Portier M.M."/>
        </authorList>
    </citation>
    <scope>NUCLEOTIDE SEQUENCE [GENOMIC DNA]</scope>
    <source>
        <strain>BALB/cJ</strain>
        <tissue>Liver</tissue>
    </source>
</reference>
<reference key="2">
    <citation type="journal article" date="2004" name="Genome Res.">
        <title>The status, quality, and expansion of the NIH full-length cDNA project: the Mammalian Gene Collection (MGC).</title>
        <authorList>
            <consortium name="The MGC Project Team"/>
        </authorList>
    </citation>
    <scope>NUCLEOTIDE SEQUENCE [LARGE SCALE MRNA] (ISOFORM 5G)</scope>
    <source>
        <strain>FVB/N</strain>
        <tissue>Colon</tissue>
    </source>
</reference>
<reference key="3">
    <citation type="journal article" date="1989" name="EMBO J.">
        <title>Multiple mRNAs encode peripherin, a neuronal intermediate filament protein.</title>
        <authorList>
            <person name="Landon F."/>
            <person name="Lemonnier M."/>
            <person name="Benarous R."/>
            <person name="Huc C."/>
            <person name="Fiszman M."/>
            <person name="Gros F."/>
            <person name="Portier M.M."/>
        </authorList>
    </citation>
    <scope>NUCLEOTIDE SEQUENCE OF 70-475</scope>
    <scope>ALTERNATIVE SPLICING</scope>
</reference>
<reference key="4">
    <citation type="submission" date="2007-07" db="UniProtKB">
        <authorList>
            <person name="Lubec G."/>
            <person name="Yang J.W."/>
            <person name="Zigmond M."/>
        </authorList>
    </citation>
    <scope>PROTEIN SEQUENCE OF 411-424</scope>
    <source>
        <tissue>Brain</tissue>
    </source>
</reference>
<reference key="5">
    <citation type="journal article" date="1999" name="Biochem. Cell Biol.">
        <title>Interactions between peripherin and neurofilaments in cultured cells: disruption of peripherin assembly by the NF-M and NF-H subunits.</title>
        <authorList>
            <person name="Beaulieu J.M."/>
            <person name="Robertson J."/>
            <person name="Julien J.P."/>
        </authorList>
    </citation>
    <scope>FUNCTION</scope>
    <scope>SUBUNIT</scope>
    <scope>SUBCELLULAR LOCATION</scope>
</reference>
<reference key="6">
    <citation type="journal article" date="1999" name="J. Cell Biol.">
        <title>The intermediate filament protein peripherin is the specific interaction partner of mouse BPAG1-n (dystonin) in neurons.</title>
        <authorList>
            <person name="Leung C.L."/>
            <person name="Sun D."/>
            <person name="Liem R.K."/>
        </authorList>
    </citation>
    <scope>INTERACTION WITH DST</scope>
    <scope>SUBCELLULAR LOCATION</scope>
</reference>
<reference key="7">
    <citation type="journal article" date="2002" name="J. Neurochem.">
        <title>Reduced number of unmyelinated sensory axons in peripherin null mice.</title>
        <authorList>
            <person name="Lariviere R.C."/>
            <person name="Nguyen M.D."/>
            <person name="Ribeiro-da-Silva A."/>
            <person name="Julien J.P."/>
        </authorList>
    </citation>
    <scope>FUNCTION</scope>
    <scope>TISSUE SPECIFICITY</scope>
    <scope>DISRUPTION PHENOTYPE</scope>
</reference>
<reference key="8">
    <citation type="journal article" date="2004" name="J. Biol. Chem.">
        <title>A frameshift deletion in peripherin gene associated with amyotrophic lateral sclerosis.</title>
        <authorList>
            <person name="Gros-Louis F."/>
            <person name="Lariviere R."/>
            <person name="Gowing G."/>
            <person name="Laurent S."/>
            <person name="Camu W."/>
            <person name="Bouchard J.P."/>
            <person name="Meininger V."/>
            <person name="Rouleau G.A."/>
            <person name="Julien J.P."/>
        </authorList>
    </citation>
    <scope>FUNCTION</scope>
    <scope>SUBCELLULAR LOCATION</scope>
</reference>
<reference key="9">
    <citation type="journal article" date="2007" name="Histochem. Cell Biol.">
        <title>Neuronal expression of peripherin, a type III intermediate filament protein, in the mouse hindbrain.</title>
        <authorList>
            <person name="Barclay M."/>
            <person name="Noakes P.G."/>
            <person name="Ryan A.F."/>
            <person name="Julien J.P."/>
            <person name="Housley G.D."/>
        </authorList>
    </citation>
    <scope>SUBCELLULAR LOCATION</scope>
    <scope>TISSUE SPECIFICITY</scope>
</reference>
<reference key="10">
    <citation type="journal article" date="2007" name="J. Biol. Chem.">
        <title>Identification of peripherin as a Akt substrate in neurons.</title>
        <authorList>
            <person name="Konishi H."/>
            <person name="Namikawa K."/>
            <person name="Shikata K."/>
            <person name="Kobatake Y."/>
            <person name="Tachibana T."/>
            <person name="Kiyama H."/>
        </authorList>
    </citation>
    <scope>PHOSPHORYLATION AT SER-66</scope>
    <scope>MUTAGENESIS OF SER-66</scope>
</reference>
<reference key="11">
    <citation type="journal article" date="2008" name="Transgenic Res.">
        <title>Transgenic mice expressing the Peripherin-EGFP genomic reporter display intrinsic peripheral nervous system fluorescence.</title>
        <authorList>
            <person name="McLenachan S."/>
            <person name="Goldshmit Y."/>
            <person name="Fowler K.J."/>
            <person name="Voullaire L."/>
            <person name="Holloway T.P."/>
            <person name="Turnley A.M."/>
            <person name="Ioannou P.A."/>
            <person name="Sarsero J.P."/>
        </authorList>
    </citation>
    <scope>SUBCELLULAR LOCATION</scope>
    <scope>TISSUE SPECIFICITY</scope>
    <scope>DEVELOPMENTAL STAGE</scope>
</reference>
<reference key="12">
    <citation type="journal article" date="2010" name="Neurosci. Lett.">
        <title>Type III intermediate filament peripherin inhibits neuritogenesis in type II spiral ganglion neurons in vitro.</title>
        <authorList>
            <person name="Barclay M."/>
            <person name="Julien J.P."/>
            <person name="Ryan A.F."/>
            <person name="Housley G.D."/>
        </authorList>
    </citation>
    <scope>FUNCTION</scope>
    <scope>SUBCELLULAR LOCATION</scope>
    <scope>DEVELOPMENTAL STAGE</scope>
    <scope>DISRUPTION PHENOTYPE</scope>
</reference>
<reference key="13">
    <citation type="journal article" date="2012" name="J. Neurosci.">
        <title>Peripherin is a subunit of peripheral nerve neurofilaments: implications for differential vulnerability of CNS and peripheral nervous system axons.</title>
        <authorList>
            <person name="Yuan A."/>
            <person name="Sasaki T."/>
            <person name="Kumar A."/>
            <person name="Peterhoff C.M."/>
            <person name="Rao M.V."/>
            <person name="Liem R.K."/>
            <person name="Julien J.P."/>
            <person name="Nixon R.A."/>
        </authorList>
    </citation>
    <scope>FUNCTION</scope>
    <scope>SUBCELLULAR LOCATION</scope>
    <scope>TISSUE SPECIFICITY</scope>
</reference>
<reference key="14">
    <citation type="journal article" date="2013" name="Acta Neuropathol.">
        <title>Charcot-Marie-Tooth type 2B disease-causing RAB7A mutant proteins show altered interaction with the neuronal intermediate filament peripherin.</title>
        <authorList>
            <person name="Cogli L."/>
            <person name="Progida C."/>
            <person name="Thomas C.L."/>
            <person name="Spencer-Dene B."/>
            <person name="Donno C."/>
            <person name="Schiavo G."/>
            <person name="Bucci C."/>
        </authorList>
    </citation>
    <scope>FUNCTION</scope>
    <scope>INTERACTION WITH RAB7A</scope>
    <scope>SUBCELLULAR LOCATION</scope>
    <scope>DEVELOPMENTAL STAGE</scope>
</reference>
<feature type="chain" id="PRO_0000063780" description="Peripherin">
    <location>
        <begin position="1"/>
        <end position="475"/>
    </location>
</feature>
<feature type="domain" description="IF rod" evidence="3">
    <location>
        <begin position="101"/>
        <end position="411"/>
    </location>
</feature>
<feature type="region of interest" description="Head">
    <location>
        <begin position="1"/>
        <end position="103"/>
    </location>
</feature>
<feature type="region of interest" description="Disordered" evidence="4">
    <location>
        <begin position="1"/>
        <end position="42"/>
    </location>
</feature>
<feature type="region of interest" description="Coil 1A">
    <location>
        <begin position="104"/>
        <end position="136"/>
    </location>
</feature>
<feature type="region of interest" description="Linker 1">
    <location>
        <begin position="137"/>
        <end position="147"/>
    </location>
</feature>
<feature type="region of interest" description="Coil 1B">
    <location>
        <begin position="148"/>
        <end position="243"/>
    </location>
</feature>
<feature type="region of interest" description="Linker 2">
    <location>
        <begin position="244"/>
        <end position="266"/>
    </location>
</feature>
<feature type="region of interest" description="Coil 2">
    <location>
        <begin position="267"/>
        <end position="409"/>
    </location>
</feature>
<feature type="region of interest" description="Tail">
    <location>
        <begin position="410"/>
        <end position="475"/>
    </location>
</feature>
<feature type="region of interest" description="Disordered" evidence="4">
    <location>
        <begin position="453"/>
        <end position="475"/>
    </location>
</feature>
<feature type="compositionally biased region" description="Low complexity" evidence="4">
    <location>
        <begin position="14"/>
        <end position="26"/>
    </location>
</feature>
<feature type="modified residue" description="3'-nitrotyrosine" evidence="1">
    <location>
        <position position="24"/>
    </location>
</feature>
<feature type="modified residue" description="Phosphoserine" evidence="1">
    <location>
        <position position="35"/>
    </location>
</feature>
<feature type="modified residue" description="Phosphoserine" evidence="1">
    <location>
        <position position="57"/>
    </location>
</feature>
<feature type="modified residue" description="Phosphoserine; by PKB/AKT1" evidence="8">
    <location>
        <position position="66"/>
    </location>
</feature>
<feature type="modified residue" description="3'-nitrotyrosine" evidence="1">
    <location>
        <position position="383"/>
    </location>
</feature>
<feature type="modified residue" description="Phosphotyrosine" evidence="1">
    <location>
        <position position="475"/>
    </location>
</feature>
<feature type="splice variant" id="VSP_002466" description="In isoform 3u." evidence="15">
    <original>K</original>
    <variation>KVREHWGNPGGPRVGRHWEWRCASQPGLSATAQ</variation>
    <location>
        <position position="294"/>
    </location>
</feature>
<feature type="splice variant" id="VSP_002467" description="In isoform 5b." evidence="15">
    <original>KVVTESQKEQHSDLDKSSIHSY</original>
    <variation>LLRPQPEL</variation>
    <location>
        <begin position="454"/>
        <end position="475"/>
    </location>
</feature>
<feature type="mutagenesis site" description="Abolishes phosphorylation by AKT." evidence="8">
    <original>S</original>
    <variation>A</variation>
    <location>
        <position position="66"/>
    </location>
</feature>
<organism>
    <name type="scientific">Mus musculus</name>
    <name type="common">Mouse</name>
    <dbReference type="NCBI Taxonomy" id="10090"/>
    <lineage>
        <taxon>Eukaryota</taxon>
        <taxon>Metazoa</taxon>
        <taxon>Chordata</taxon>
        <taxon>Craniata</taxon>
        <taxon>Vertebrata</taxon>
        <taxon>Euteleostomi</taxon>
        <taxon>Mammalia</taxon>
        <taxon>Eutheria</taxon>
        <taxon>Euarchontoglires</taxon>
        <taxon>Glires</taxon>
        <taxon>Rodentia</taxon>
        <taxon>Myomorpha</taxon>
        <taxon>Muroidea</taxon>
        <taxon>Muridae</taxon>
        <taxon>Murinae</taxon>
        <taxon>Mus</taxon>
        <taxon>Mus</taxon>
    </lineage>
</organism>